<comment type="function">
    <text evidence="3">Cleaves alpha 1,2-, alpha 1,3-, and alpha 1,6-linked mannose residues on cytoplasmic free oligosaccharides generated by N-glycoprotein degradation pathways.</text>
</comment>
<comment type="catalytic activity">
    <reaction evidence="3">
        <text>Hydrolysis of terminal, non-reducing alpha-D-mannose residues in alpha-D-mannosides.</text>
        <dbReference type="EC" id="3.2.1.24"/>
    </reaction>
</comment>
<comment type="cofactor">
    <cofactor evidence="3">
        <name>Co(2+)</name>
        <dbReference type="ChEBI" id="CHEBI:48828"/>
    </cofactor>
</comment>
<comment type="activity regulation">
    <text evidence="3">Strongly inhibited by swainsonine. Also inhibited to a lesser extent by deoxymannojirimycin (DMM).</text>
</comment>
<comment type="subcellular location">
    <subcellularLocation>
        <location evidence="3">Cytoplasm</location>
    </subcellularLocation>
</comment>
<comment type="alternative products">
    <event type="alternative splicing"/>
    <isoform>
        <id>Q9NTJ4-1</id>
        <name>1</name>
        <sequence type="displayed"/>
    </isoform>
    <isoform>
        <id>Q9NTJ4-2</id>
        <name>2</name>
        <sequence type="described" ref="VSP_046375"/>
    </isoform>
    <isoform>
        <id>Q9NTJ4-3</id>
        <name>3</name>
        <sequence type="described" ref="VSP_046395"/>
    </isoform>
    <isoform>
        <id>Q9NTJ4-4</id>
        <name>4</name>
        <sequence type="described" ref="VSP_046895"/>
    </isoform>
</comment>
<comment type="disease" evidence="4">
    <disease id="DI-06360">
        <name>Congenital disorder of deglycosylation 2</name>
        <acronym>CDDG2</acronym>
        <description>An autosomal recessive disorder characterized by facial dysmorphism, congenital anomalies such as tongue hamartoma, variable degrees of intellectual disability, and brain anomalies including polymicrogyria, interhemispheric cysts, hypothalamic hamartoma, callosal anomalies, and hypoplasia of brainstem and cerebellar vermis.</description>
        <dbReference type="MIM" id="619775"/>
    </disease>
    <text>The disease may be caused by variants affecting the gene represented in this entry.</text>
</comment>
<comment type="similarity">
    <text evidence="8">Belongs to the glycosyl hydrolase 38 family.</text>
</comment>
<comment type="sequence caution" evidence="8">
    <conflict type="frameshift">
        <sequence resource="EMBL-CDS" id="AAC00190"/>
    </conflict>
</comment>
<comment type="sequence caution" evidence="8">
    <conflict type="frameshift">
        <sequence resource="EMBL-CDS" id="AAC00568"/>
    </conflict>
</comment>
<protein>
    <recommendedName>
        <fullName>Alpha-mannosidase 2C1</fullName>
        <ecNumber evidence="3">3.2.1.24</ecNumber>
    </recommendedName>
    <alternativeName>
        <fullName>Alpha mannosidase 6A8B</fullName>
    </alternativeName>
    <alternativeName>
        <fullName>Alpha-D-mannoside mannohydrolase</fullName>
    </alternativeName>
    <alternativeName>
        <fullName>Mannosidase alpha class 2C member 1</fullName>
    </alternativeName>
</protein>
<keyword id="KW-0025">Alternative splicing</keyword>
<keyword id="KW-0170">Cobalt</keyword>
<keyword id="KW-0963">Cytoplasm</keyword>
<keyword id="KW-0326">Glycosidase</keyword>
<keyword id="KW-0378">Hydrolase</keyword>
<keyword id="KW-0479">Metal-binding</keyword>
<keyword id="KW-1267">Proteomics identification</keyword>
<keyword id="KW-1185">Reference proteome</keyword>
<dbReference type="EC" id="3.2.1.24" evidence="3"/>
<dbReference type="EMBL" id="AF044414">
    <property type="protein sequence ID" value="AAC00190.2"/>
    <property type="status" value="ALT_FRAME"/>
    <property type="molecule type" value="mRNA"/>
</dbReference>
<dbReference type="EMBL" id="AL136876">
    <property type="protein sequence ID" value="CAB66810.1"/>
    <property type="molecule type" value="mRNA"/>
</dbReference>
<dbReference type="EMBL" id="AK225145">
    <property type="status" value="NOT_ANNOTATED_CDS"/>
    <property type="molecule type" value="mRNA"/>
</dbReference>
<dbReference type="EMBL" id="AC068338">
    <property type="status" value="NOT_ANNOTATED_CDS"/>
    <property type="molecule type" value="Genomic_DNA"/>
</dbReference>
<dbReference type="EMBL" id="CH471136">
    <property type="protein sequence ID" value="EAW99253.1"/>
    <property type="molecule type" value="Genomic_DNA"/>
</dbReference>
<dbReference type="EMBL" id="BC050550">
    <property type="protein sequence ID" value="AAH50550.1"/>
    <property type="molecule type" value="mRNA"/>
</dbReference>
<dbReference type="EMBL" id="BC080191">
    <property type="protein sequence ID" value="AAH80191.1"/>
    <property type="molecule type" value="mRNA"/>
</dbReference>
<dbReference type="EMBL" id="U37248">
    <property type="protein sequence ID" value="AAC00568.1"/>
    <property type="status" value="ALT_SEQ"/>
    <property type="molecule type" value="mRNA"/>
</dbReference>
<dbReference type="CCDS" id="CCDS32298.1">
    <molecule id="Q9NTJ4-1"/>
</dbReference>
<dbReference type="CCDS" id="CCDS58389.1">
    <molecule id="Q9NTJ4-3"/>
</dbReference>
<dbReference type="CCDS" id="CCDS58390.1">
    <molecule id="Q9NTJ4-2"/>
</dbReference>
<dbReference type="CCDS" id="CCDS58391.1">
    <molecule id="Q9NTJ4-4"/>
</dbReference>
<dbReference type="PIR" id="T46931">
    <property type="entry name" value="T46931"/>
</dbReference>
<dbReference type="RefSeq" id="NP_001243423.1">
    <molecule id="Q9NTJ4-4"/>
    <property type="nucleotide sequence ID" value="NM_001256494.2"/>
</dbReference>
<dbReference type="RefSeq" id="NP_001243424.1">
    <molecule id="Q9NTJ4-2"/>
    <property type="nucleotide sequence ID" value="NM_001256495.2"/>
</dbReference>
<dbReference type="RefSeq" id="NP_001243425.1">
    <molecule id="Q9NTJ4-3"/>
    <property type="nucleotide sequence ID" value="NM_001256496.2"/>
</dbReference>
<dbReference type="RefSeq" id="NP_006706.2">
    <molecule id="Q9NTJ4-1"/>
    <property type="nucleotide sequence ID" value="NM_006715.3"/>
</dbReference>
<dbReference type="SMR" id="Q9NTJ4"/>
<dbReference type="BioGRID" id="110296">
    <property type="interactions" value="38"/>
</dbReference>
<dbReference type="FunCoup" id="Q9NTJ4">
    <property type="interactions" value="1567"/>
</dbReference>
<dbReference type="IntAct" id="Q9NTJ4">
    <property type="interactions" value="32"/>
</dbReference>
<dbReference type="MINT" id="Q9NTJ4"/>
<dbReference type="STRING" id="9606.ENSP00000457788"/>
<dbReference type="CAZy" id="GH38">
    <property type="family name" value="Glycoside Hydrolase Family 38"/>
</dbReference>
<dbReference type="GlyGen" id="Q9NTJ4">
    <property type="glycosylation" value="2 sites, 1 O-linked glycan (1 site)"/>
</dbReference>
<dbReference type="iPTMnet" id="Q9NTJ4"/>
<dbReference type="PhosphoSitePlus" id="Q9NTJ4"/>
<dbReference type="BioMuta" id="MAN2C1"/>
<dbReference type="DMDM" id="27923805"/>
<dbReference type="jPOST" id="Q9NTJ4"/>
<dbReference type="MassIVE" id="Q9NTJ4"/>
<dbReference type="PaxDb" id="9606-ENSP00000457788"/>
<dbReference type="PeptideAtlas" id="Q9NTJ4"/>
<dbReference type="ProteomicsDB" id="41029"/>
<dbReference type="ProteomicsDB" id="41922"/>
<dbReference type="ProteomicsDB" id="43020"/>
<dbReference type="ProteomicsDB" id="82619">
    <molecule id="Q9NTJ4-1"/>
</dbReference>
<dbReference type="Pumba" id="Q9NTJ4"/>
<dbReference type="Antibodypedia" id="27278">
    <property type="antibodies" value="102 antibodies from 20 providers"/>
</dbReference>
<dbReference type="DNASU" id="4123"/>
<dbReference type="Ensembl" id="ENST00000267978.10">
    <molecule id="Q9NTJ4-1"/>
    <property type="protein sequence ID" value="ENSP00000267978.4"/>
    <property type="gene ID" value="ENSG00000140400.18"/>
</dbReference>
<dbReference type="Ensembl" id="ENST00000563622.5">
    <molecule id="Q9NTJ4-3"/>
    <property type="protein sequence ID" value="ENSP00000454589.1"/>
    <property type="gene ID" value="ENSG00000140400.18"/>
</dbReference>
<dbReference type="Ensembl" id="ENST00000565683.5">
    <molecule id="Q9NTJ4-4"/>
    <property type="protein sequence ID" value="ENSP00000457788.1"/>
    <property type="gene ID" value="ENSG00000140400.18"/>
</dbReference>
<dbReference type="Ensembl" id="ENST00000569482.5">
    <molecule id="Q9NTJ4-2"/>
    <property type="protein sequence ID" value="ENSP00000455998.1"/>
    <property type="gene ID" value="ENSG00000140400.18"/>
</dbReference>
<dbReference type="GeneID" id="4123"/>
<dbReference type="KEGG" id="hsa:4123"/>
<dbReference type="MANE-Select" id="ENST00000267978.10">
    <property type="protein sequence ID" value="ENSP00000267978.4"/>
    <property type="RefSeq nucleotide sequence ID" value="NM_006715.4"/>
    <property type="RefSeq protein sequence ID" value="NP_006706.2"/>
</dbReference>
<dbReference type="UCSC" id="uc002baf.5">
    <molecule id="Q9NTJ4-1"/>
    <property type="organism name" value="human"/>
</dbReference>
<dbReference type="AGR" id="HGNC:6827"/>
<dbReference type="CTD" id="4123"/>
<dbReference type="DisGeNET" id="4123"/>
<dbReference type="GeneCards" id="MAN2C1"/>
<dbReference type="HGNC" id="HGNC:6827">
    <property type="gene designation" value="MAN2C1"/>
</dbReference>
<dbReference type="HPA" id="ENSG00000140400">
    <property type="expression patterns" value="Low tissue specificity"/>
</dbReference>
<dbReference type="MalaCards" id="MAN2C1"/>
<dbReference type="MIM" id="154580">
    <property type="type" value="gene"/>
</dbReference>
<dbReference type="MIM" id="619775">
    <property type="type" value="phenotype"/>
</dbReference>
<dbReference type="neXtProt" id="NX_Q9NTJ4"/>
<dbReference type="OpenTargets" id="ENSG00000140400"/>
<dbReference type="Orphanet" id="528084">
    <property type="disease" value="Non-specific syndromic intellectual disability"/>
</dbReference>
<dbReference type="PharmGKB" id="PA30576"/>
<dbReference type="VEuPathDB" id="HostDB:ENSG00000140400"/>
<dbReference type="eggNOG" id="KOG4342">
    <property type="taxonomic scope" value="Eukaryota"/>
</dbReference>
<dbReference type="GeneTree" id="ENSGT01030000234638"/>
<dbReference type="HOGENOM" id="CLU_003442_0_1_1"/>
<dbReference type="InParanoid" id="Q9NTJ4"/>
<dbReference type="OMA" id="GQYWDAW"/>
<dbReference type="OrthoDB" id="10261055at2759"/>
<dbReference type="PAN-GO" id="Q9NTJ4">
    <property type="GO annotations" value="2 GO annotations based on evolutionary models"/>
</dbReference>
<dbReference type="PhylomeDB" id="Q9NTJ4"/>
<dbReference type="TreeFam" id="TF300335"/>
<dbReference type="BRENDA" id="3.2.1.24">
    <property type="organism ID" value="2681"/>
</dbReference>
<dbReference type="PathwayCommons" id="Q9NTJ4"/>
<dbReference type="Reactome" id="R-HSA-8853383">
    <property type="pathway name" value="Lysosomal oligosaccharide catabolism"/>
</dbReference>
<dbReference type="SignaLink" id="Q9NTJ4"/>
<dbReference type="BioGRID-ORCS" id="4123">
    <property type="hits" value="15 hits in 1160 CRISPR screens"/>
</dbReference>
<dbReference type="ChiTaRS" id="MAN2C1">
    <property type="organism name" value="human"/>
</dbReference>
<dbReference type="GenomeRNAi" id="4123"/>
<dbReference type="Pharos" id="Q9NTJ4">
    <property type="development level" value="Tbio"/>
</dbReference>
<dbReference type="PRO" id="PR:Q9NTJ4"/>
<dbReference type="Proteomes" id="UP000005640">
    <property type="component" value="Chromosome 15"/>
</dbReference>
<dbReference type="RNAct" id="Q9NTJ4">
    <property type="molecule type" value="protein"/>
</dbReference>
<dbReference type="Bgee" id="ENSG00000140400">
    <property type="expression patterns" value="Expressed in right lobe of thyroid gland and 149 other cell types or tissues"/>
</dbReference>
<dbReference type="ExpressionAtlas" id="Q9NTJ4">
    <property type="expression patterns" value="baseline and differential"/>
</dbReference>
<dbReference type="GO" id="GO:0005829">
    <property type="term" value="C:cytosol"/>
    <property type="evidence" value="ECO:0000304"/>
    <property type="project" value="Reactome"/>
</dbReference>
<dbReference type="GO" id="GO:0005654">
    <property type="term" value="C:nucleoplasm"/>
    <property type="evidence" value="ECO:0000314"/>
    <property type="project" value="HPA"/>
</dbReference>
<dbReference type="GO" id="GO:0004559">
    <property type="term" value="F:alpha-mannosidase activity"/>
    <property type="evidence" value="ECO:0000318"/>
    <property type="project" value="GO_Central"/>
</dbReference>
<dbReference type="GO" id="GO:0030246">
    <property type="term" value="F:carbohydrate binding"/>
    <property type="evidence" value="ECO:0007669"/>
    <property type="project" value="InterPro"/>
</dbReference>
<dbReference type="GO" id="GO:0046872">
    <property type="term" value="F:metal ion binding"/>
    <property type="evidence" value="ECO:0007669"/>
    <property type="project" value="UniProtKB-KW"/>
</dbReference>
<dbReference type="GO" id="GO:0006013">
    <property type="term" value="P:mannose metabolic process"/>
    <property type="evidence" value="ECO:0007669"/>
    <property type="project" value="InterPro"/>
</dbReference>
<dbReference type="GO" id="GO:0009313">
    <property type="term" value="P:oligosaccharide catabolic process"/>
    <property type="evidence" value="ECO:0000318"/>
    <property type="project" value="GO_Central"/>
</dbReference>
<dbReference type="CDD" id="cd10813">
    <property type="entry name" value="GH38N_AMII_Man2C1"/>
    <property type="match status" value="1"/>
</dbReference>
<dbReference type="FunFam" id="2.60.40.2220:FF:000001">
    <property type="entry name" value="Alpha-mannosidase 2C1"/>
    <property type="match status" value="1"/>
</dbReference>
<dbReference type="FunFam" id="1.20.1270.50:FF:000004">
    <property type="entry name" value="alpha-mannosidase 2C1 isoform X1"/>
    <property type="match status" value="1"/>
</dbReference>
<dbReference type="FunFam" id="3.20.110.10:FF:000002">
    <property type="entry name" value="alpha-mannosidase 2C1 isoform X1"/>
    <property type="match status" value="1"/>
</dbReference>
<dbReference type="FunFam" id="2.70.98.30:FF:000001">
    <property type="entry name" value="alpha-mannosidase 2C1 isoform X2"/>
    <property type="match status" value="1"/>
</dbReference>
<dbReference type="Gene3D" id="2.60.40.2220">
    <property type="match status" value="1"/>
</dbReference>
<dbReference type="Gene3D" id="3.20.110.10">
    <property type="entry name" value="Glycoside hydrolase 38, N terminal domain"/>
    <property type="match status" value="1"/>
</dbReference>
<dbReference type="Gene3D" id="1.20.1270.50">
    <property type="entry name" value="Glycoside hydrolase family 38, central domain"/>
    <property type="match status" value="1"/>
</dbReference>
<dbReference type="Gene3D" id="2.70.98.30">
    <property type="entry name" value="Golgi alpha-mannosidase II, domain 4"/>
    <property type="match status" value="1"/>
</dbReference>
<dbReference type="InterPro" id="IPR054723">
    <property type="entry name" value="Ams1-like_N"/>
</dbReference>
<dbReference type="InterPro" id="IPR011013">
    <property type="entry name" value="Gal_mutarotase_sf_dom"/>
</dbReference>
<dbReference type="InterPro" id="IPR041147">
    <property type="entry name" value="GH38_C"/>
</dbReference>
<dbReference type="InterPro" id="IPR011330">
    <property type="entry name" value="Glyco_hydro/deAcase_b/a-brl"/>
</dbReference>
<dbReference type="InterPro" id="IPR011682">
    <property type="entry name" value="Glyco_hydro_38_C"/>
</dbReference>
<dbReference type="InterPro" id="IPR015341">
    <property type="entry name" value="Glyco_hydro_38_cen"/>
</dbReference>
<dbReference type="InterPro" id="IPR037094">
    <property type="entry name" value="Glyco_hydro_38_cen_sf"/>
</dbReference>
<dbReference type="InterPro" id="IPR000602">
    <property type="entry name" value="Glyco_hydro_38_N"/>
</dbReference>
<dbReference type="InterPro" id="IPR027291">
    <property type="entry name" value="Glyco_hydro_38_N_sf"/>
</dbReference>
<dbReference type="InterPro" id="IPR028995">
    <property type="entry name" value="Glyco_hydro_57/38_cen_sf"/>
</dbReference>
<dbReference type="PANTHER" id="PTHR46017">
    <property type="entry name" value="ALPHA-MANNOSIDASE 2C1"/>
    <property type="match status" value="1"/>
</dbReference>
<dbReference type="PANTHER" id="PTHR46017:SF1">
    <property type="entry name" value="ALPHA-MANNOSIDASE 2C1"/>
    <property type="match status" value="1"/>
</dbReference>
<dbReference type="Pfam" id="PF09261">
    <property type="entry name" value="Alpha-mann_mid"/>
    <property type="match status" value="1"/>
</dbReference>
<dbReference type="Pfam" id="PF22907">
    <property type="entry name" value="Ams1-like_1st"/>
    <property type="match status" value="1"/>
</dbReference>
<dbReference type="Pfam" id="PF17677">
    <property type="entry name" value="Glyco_hydro38C2"/>
    <property type="match status" value="1"/>
</dbReference>
<dbReference type="Pfam" id="PF07748">
    <property type="entry name" value="Glyco_hydro_38C"/>
    <property type="match status" value="1"/>
</dbReference>
<dbReference type="Pfam" id="PF01074">
    <property type="entry name" value="Glyco_hydro_38N"/>
    <property type="match status" value="1"/>
</dbReference>
<dbReference type="SMART" id="SM00872">
    <property type="entry name" value="Alpha-mann_mid"/>
    <property type="match status" value="1"/>
</dbReference>
<dbReference type="SUPFAM" id="SSF88688">
    <property type="entry name" value="Families 57/38 glycoside transferase middle domain"/>
    <property type="match status" value="1"/>
</dbReference>
<dbReference type="SUPFAM" id="SSF74650">
    <property type="entry name" value="Galactose mutarotase-like"/>
    <property type="match status" value="1"/>
</dbReference>
<dbReference type="SUPFAM" id="SSF88713">
    <property type="entry name" value="Glycoside hydrolase/deacetylase"/>
    <property type="match status" value="1"/>
</dbReference>
<proteinExistence type="evidence at protein level"/>
<feature type="chain" id="PRO_0000206907" description="Alpha-mannosidase 2C1">
    <location>
        <begin position="1"/>
        <end position="1040"/>
    </location>
</feature>
<feature type="active site" description="Nucleophile" evidence="1">
    <location>
        <position position="372"/>
    </location>
</feature>
<feature type="binding site" evidence="8">
    <location>
        <position position="260"/>
    </location>
    <ligand>
        <name>Co(2+)</name>
        <dbReference type="ChEBI" id="CHEBI:48828"/>
    </ligand>
</feature>
<feature type="binding site" evidence="8">
    <location>
        <position position="262"/>
    </location>
    <ligand>
        <name>Co(2+)</name>
        <dbReference type="ChEBI" id="CHEBI:48828"/>
    </ligand>
</feature>
<feature type="binding site" evidence="8">
    <location>
        <position position="372"/>
    </location>
    <ligand>
        <name>Co(2+)</name>
        <dbReference type="ChEBI" id="CHEBI:48828"/>
    </ligand>
</feature>
<feature type="binding site" evidence="8">
    <location>
        <position position="577"/>
    </location>
    <ligand>
        <name>Co(2+)</name>
        <dbReference type="ChEBI" id="CHEBI:48828"/>
    </ligand>
</feature>
<feature type="splice variant" id="VSP_046395" description="In isoform 3." evidence="7">
    <location>
        <begin position="201"/>
        <end position="299"/>
    </location>
</feature>
<feature type="splice variant" id="VSP_046895" description="In isoform 4." evidence="8">
    <original>ALVTVPSMGYAPVPPPTSLQPLLPQQPVFVVQE</original>
    <variation>GLTPSPGDSAQHGLCSCSSPHLTAAPAAPAACVRSARAPTDSASRPPPTK</variation>
    <location>
        <begin position="650"/>
        <end position="682"/>
    </location>
</feature>
<feature type="splice variant" id="VSP_046375" description="In isoform 2." evidence="6">
    <location>
        <begin position="913"/>
        <end position="935"/>
    </location>
</feature>
<feature type="sequence variant" id="VAR_087012" description="In CDDG2; uncertain significance; results in defective processing of free oligosaccharides as shown by complementation assay in MAN2C1-deficient cells; dbSNP:rs190692217." evidence="4">
    <original>G</original>
    <variation>R</variation>
    <location>
        <position position="203"/>
    </location>
</feature>
<feature type="sequence variant" id="VAR_069180" description="In dbSNP:rs200595616." evidence="2">
    <original>R</original>
    <variation>C</variation>
    <location>
        <position position="323"/>
    </location>
</feature>
<feature type="sequence variant" id="VAR_087013" description="In CDDG2; uncertain significance; severely decreased mannosidase activity; results in defective processing of free oligosaccharides as shown by complementation assay in MAN2C1-deficient cells; dbSNP:rs62029711." evidence="4">
    <original>R</original>
    <variation>Q</variation>
    <location>
        <position position="768"/>
    </location>
</feature>
<feature type="sequence variant" id="VAR_061192" description="In dbSNP:rs58557444.">
    <original>R</original>
    <variation>H</variation>
    <location>
        <position position="818"/>
    </location>
</feature>
<feature type="sequence variant" id="VAR_087014" description="In CDDG2; uncertain significance; has no effect on processing of free oligosaccharides as shown by complementation assay in MAN2C1-deficient cells; dbSNP:rs143755898." evidence="4">
    <original>C</original>
    <variation>S</variation>
    <location>
        <position position="871"/>
    </location>
</feature>
<feature type="sequence variant" id="VAR_049211" description="In dbSNP:rs3803467.">
    <original>V</original>
    <variation>M</variation>
    <location>
        <position position="950"/>
    </location>
</feature>
<feature type="sequence variant" id="VAR_021914" description="In dbSNP:rs3803466." evidence="5">
    <original>V</original>
    <variation>I</variation>
    <location>
        <position position="960"/>
    </location>
</feature>
<feature type="sequence variant" id="VAR_049212" description="In dbSNP:rs5745934.">
    <original>R</original>
    <variation>K</variation>
    <location>
        <position position="975"/>
    </location>
</feature>
<feature type="sequence conflict" description="In Ref. 1; AAC00190." evidence="8" ref="1">
    <original>A</original>
    <variation>F</variation>
    <location>
        <position position="6"/>
    </location>
</feature>
<feature type="sequence conflict" description="In Ref. 1; AAC00190." evidence="8" ref="1">
    <original>L</original>
    <variation>F</variation>
    <location>
        <position position="14"/>
    </location>
</feature>
<feature type="sequence conflict" description="In Ref. 1; AAC00190." evidence="8" ref="1">
    <original>L</original>
    <variation>I</variation>
    <location>
        <position position="24"/>
    </location>
</feature>
<feature type="sequence conflict" description="In Ref. 1; AAC00190." evidence="8" ref="1">
    <original>M</original>
    <variation>I</variation>
    <location>
        <position position="170"/>
    </location>
</feature>
<accession>Q9NTJ4</accession>
<accession>H3BMX2</accession>
<accession>H3BQY8</accession>
<accession>H3BUT6</accession>
<accession>Q13358</accession>
<accession>Q68EM8</accession>
<accession>Q9UL64</accession>
<sequence>MAAAPALKHWRTTLERVEKFVSPLYFTDCNLRGRLFGASCPVAVLSSFLTPERLPYQEAVQRDFRPAQVGDSFGPTWWTCWFRVELTIPEAWVGQEVHLCWESDGEGLVWRDGEPVQGLTKEGEKTSYVLTDRLGERDPRSLTLYVEVACNGLLGAGKGSMIAAPDPEKMFQLSRAELAVFHRDVHMLLVDLELLLGIAKGLGKDNQRSFQALYTANQMVNVCDPAQPETFPVAQALASRFFGQHGGESQHTIHATGHCHIDTAWLWPFKETVRKCARSWVTALQLMERNPEFIFACSQAQQLEWVKSRYPGLYSRIQEFACRGQFVPVGGTWVEMDGNLPSGEAMVRQFLQGQNFFLQEFGKMCSEFWLPDTFGYSAQLPQIMHGCGIRRFLTQKLSWNLVNSFPHHTFFWEGLDGSRVLVHFPPGDSYGMQGSVEEVLKTVANNRDKGRANHSAFLFGFGDGGGGPTQTMLDRLKRLSNTDGLPRVQLSSPRQLFSALESDSEQLCTWVGELFLELHNGTYTTHAQIKKGNRECERILHDVELLSSLALARSAQFLYPAAQLQHLWRLLLLNQFHDVVTGSCIQMVAEEAMCHYEDIRSHGNTLLSAAAAALCAGEPGPEGLLIVNTLPWKRIEVMALPKPGGAHSLALVTVPSMGYAPVPPPTSLQPLLPQQPVFVVQETDGSVTLDNGIIRVKLDPTGRLTSLVLVASGREAIAEGAVGNQFVLFDDVPLYWDAWDVMDYHLETRKPVLGQAGTLAVGTEGGLRGSAWFLLQISPNSRLSQEVVLDVGCPYVRFHTEVHWHEAHKFLKVEFPARVRSSQATYEIQFGHLQRPTHYNTSWDWARFEVWAHRWMDLSEHGFGLALLNDCKYGASVRGSILSLSLLRAPKAPDATADTGRHEFTYALMPHKGSFQDAGVIQAAYSLNFPLLALPAPSPAPATSWSAFSVSSPAVVLETVKQAESSPQRRSLVLRLYEAHGSHVDCWLHLSLPVQEAILCDLLERPDPAGHLTLRDNRLKLTFSPFQVLSLLLVLQPPPH</sequence>
<name>MA2C1_HUMAN</name>
<organism>
    <name type="scientific">Homo sapiens</name>
    <name type="common">Human</name>
    <dbReference type="NCBI Taxonomy" id="9606"/>
    <lineage>
        <taxon>Eukaryota</taxon>
        <taxon>Metazoa</taxon>
        <taxon>Chordata</taxon>
        <taxon>Craniata</taxon>
        <taxon>Vertebrata</taxon>
        <taxon>Euteleostomi</taxon>
        <taxon>Mammalia</taxon>
        <taxon>Eutheria</taxon>
        <taxon>Euarchontoglires</taxon>
        <taxon>Primates</taxon>
        <taxon>Haplorrhini</taxon>
        <taxon>Catarrhini</taxon>
        <taxon>Hominidae</taxon>
        <taxon>Homo</taxon>
    </lineage>
</organism>
<evidence type="ECO:0000250" key="1">
    <source>
        <dbReference type="UniProtKB" id="Q29451"/>
    </source>
</evidence>
<evidence type="ECO:0000269" key="2">
    <source>
    </source>
</evidence>
<evidence type="ECO:0000269" key="3">
    <source>
    </source>
</evidence>
<evidence type="ECO:0000269" key="4">
    <source>
    </source>
</evidence>
<evidence type="ECO:0000269" key="5">
    <source ref="3"/>
</evidence>
<evidence type="ECO:0000303" key="6">
    <source>
    </source>
</evidence>
<evidence type="ECO:0000303" key="7">
    <source ref="3"/>
</evidence>
<evidence type="ECO:0000305" key="8"/>
<reference key="1">
    <citation type="journal article" date="1999" name="Ji Chu Yi Xue Yu Lin Chuang">
        <title>Cloning of a human full-length cDNA encoding an alpha-mannosidase.</title>
        <authorList>
            <person name="Li B."/>
            <person name="Ma F.-R."/>
            <person name="Shi G.-X."/>
            <person name="Zhao F.-T."/>
            <person name="Li J."/>
            <person name="Li L."/>
            <person name="Wang Y."/>
            <person name="Cai Y.-Y."/>
            <person name="Zhu L.-P."/>
        </authorList>
    </citation>
    <scope>NUCLEOTIDE SEQUENCE [MRNA] (ISOFORM 1)</scope>
</reference>
<reference key="2">
    <citation type="journal article" date="2001" name="Genome Res.">
        <title>Towards a catalog of human genes and proteins: sequencing and analysis of 500 novel complete protein coding human cDNAs.</title>
        <authorList>
            <person name="Wiemann S."/>
            <person name="Weil B."/>
            <person name="Wellenreuther R."/>
            <person name="Gassenhuber J."/>
            <person name="Glassl S."/>
            <person name="Ansorge W."/>
            <person name="Boecher M."/>
            <person name="Bloecker H."/>
            <person name="Bauersachs S."/>
            <person name="Blum H."/>
            <person name="Lauber J."/>
            <person name="Duesterhoeft A."/>
            <person name="Beyer A."/>
            <person name="Koehrer K."/>
            <person name="Strack N."/>
            <person name="Mewes H.-W."/>
            <person name="Ottenwaelder B."/>
            <person name="Obermaier B."/>
            <person name="Tampe J."/>
            <person name="Heubner D."/>
            <person name="Wambutt R."/>
            <person name="Korn B."/>
            <person name="Klein M."/>
            <person name="Poustka A."/>
        </authorList>
    </citation>
    <scope>NUCLEOTIDE SEQUENCE [LARGE SCALE MRNA] (ISOFORM 1)</scope>
    <source>
        <tissue>Testis</tissue>
    </source>
</reference>
<reference key="3">
    <citation type="submission" date="2006-07" db="EMBL/GenBank/DDBJ databases">
        <authorList>
            <person name="Suzuki Y."/>
            <person name="Sugano S."/>
            <person name="Totoki Y."/>
            <person name="Toyoda A."/>
            <person name="Takeda T."/>
            <person name="Sakaki Y."/>
            <person name="Tanaka A."/>
            <person name="Yokoyama S."/>
        </authorList>
    </citation>
    <scope>NUCLEOTIDE SEQUENCE [LARGE SCALE MRNA] (ISOFORM 3)</scope>
    <scope>VARIANT ILE-960</scope>
    <source>
        <tissue>Cerebellum</tissue>
    </source>
</reference>
<reference key="4">
    <citation type="journal article" date="2006" name="Nature">
        <title>Analysis of the DNA sequence and duplication history of human chromosome 15.</title>
        <authorList>
            <person name="Zody M.C."/>
            <person name="Garber M."/>
            <person name="Sharpe T."/>
            <person name="Young S.K."/>
            <person name="Rowen L."/>
            <person name="O'Neill K."/>
            <person name="Whittaker C.A."/>
            <person name="Kamal M."/>
            <person name="Chang J.L."/>
            <person name="Cuomo C.A."/>
            <person name="Dewar K."/>
            <person name="FitzGerald M.G."/>
            <person name="Kodira C.D."/>
            <person name="Madan A."/>
            <person name="Qin S."/>
            <person name="Yang X."/>
            <person name="Abbasi N."/>
            <person name="Abouelleil A."/>
            <person name="Arachchi H.M."/>
            <person name="Baradarani L."/>
            <person name="Birditt B."/>
            <person name="Bloom S."/>
            <person name="Bloom T."/>
            <person name="Borowsky M.L."/>
            <person name="Burke J."/>
            <person name="Butler J."/>
            <person name="Cook A."/>
            <person name="DeArellano K."/>
            <person name="DeCaprio D."/>
            <person name="Dorris L. III"/>
            <person name="Dors M."/>
            <person name="Eichler E.E."/>
            <person name="Engels R."/>
            <person name="Fahey J."/>
            <person name="Fleetwood P."/>
            <person name="Friedman C."/>
            <person name="Gearin G."/>
            <person name="Hall J.L."/>
            <person name="Hensley G."/>
            <person name="Johnson E."/>
            <person name="Jones C."/>
            <person name="Kamat A."/>
            <person name="Kaur A."/>
            <person name="Locke D.P."/>
            <person name="Madan A."/>
            <person name="Munson G."/>
            <person name="Jaffe D.B."/>
            <person name="Lui A."/>
            <person name="Macdonald P."/>
            <person name="Mauceli E."/>
            <person name="Naylor J.W."/>
            <person name="Nesbitt R."/>
            <person name="Nicol R."/>
            <person name="O'Leary S.B."/>
            <person name="Ratcliffe A."/>
            <person name="Rounsley S."/>
            <person name="She X."/>
            <person name="Sneddon K.M.B."/>
            <person name="Stewart S."/>
            <person name="Sougnez C."/>
            <person name="Stone S.M."/>
            <person name="Topham K."/>
            <person name="Vincent D."/>
            <person name="Wang S."/>
            <person name="Zimmer A.R."/>
            <person name="Birren B.W."/>
            <person name="Hood L."/>
            <person name="Lander E.S."/>
            <person name="Nusbaum C."/>
        </authorList>
    </citation>
    <scope>NUCLEOTIDE SEQUENCE [LARGE SCALE GENOMIC DNA]</scope>
</reference>
<reference key="5">
    <citation type="submission" date="2005-07" db="EMBL/GenBank/DDBJ databases">
        <authorList>
            <person name="Mural R.J."/>
            <person name="Istrail S."/>
            <person name="Sutton G.G."/>
            <person name="Florea L."/>
            <person name="Halpern A.L."/>
            <person name="Mobarry C.M."/>
            <person name="Lippert R."/>
            <person name="Walenz B."/>
            <person name="Shatkay H."/>
            <person name="Dew I."/>
            <person name="Miller J.R."/>
            <person name="Flanigan M.J."/>
            <person name="Edwards N.J."/>
            <person name="Bolanos R."/>
            <person name="Fasulo D."/>
            <person name="Halldorsson B.V."/>
            <person name="Hannenhalli S."/>
            <person name="Turner R."/>
            <person name="Yooseph S."/>
            <person name="Lu F."/>
            <person name="Nusskern D.R."/>
            <person name="Shue B.C."/>
            <person name="Zheng X.H."/>
            <person name="Zhong F."/>
            <person name="Delcher A.L."/>
            <person name="Huson D.H."/>
            <person name="Kravitz S.A."/>
            <person name="Mouchard L."/>
            <person name="Reinert K."/>
            <person name="Remington K.A."/>
            <person name="Clark A.G."/>
            <person name="Waterman M.S."/>
            <person name="Eichler E.E."/>
            <person name="Adams M.D."/>
            <person name="Hunkapiller M.W."/>
            <person name="Myers E.W."/>
            <person name="Venter J.C."/>
        </authorList>
    </citation>
    <scope>NUCLEOTIDE SEQUENCE [LARGE SCALE GENOMIC DNA]</scope>
</reference>
<reference key="6">
    <citation type="journal article" date="2004" name="Genome Res.">
        <title>The status, quality, and expansion of the NIH full-length cDNA project: the Mammalian Gene Collection (MGC).</title>
        <authorList>
            <consortium name="The MGC Project Team"/>
        </authorList>
    </citation>
    <scope>NUCLEOTIDE SEQUENCE [LARGE SCALE MRNA] (ISOFORMS 1 AND 2)</scope>
    <scope>VARIANT CYS-323</scope>
    <source>
        <tissue>Skin</tissue>
        <tissue>Uterus</tissue>
    </source>
</reference>
<reference key="7">
    <citation type="journal article" date="1997" name="Zhonghua Wei Sheng Wu Xue He Mian Yi Xue Za Zhi">
        <title>Cloning of a human cDNA homologous to the cDNA encoding a rat ER alpha-mannosidase.</title>
        <authorList>
            <person name="Zhang L.-X."/>
            <person name="Zhu L.-P."/>
            <person name="Shi W."/>
            <person name="Ma F.-R."/>
        </authorList>
    </citation>
    <scope>NUCLEOTIDE SEQUENCE [MRNA] OF 630-1040 (ISOFORM 1)</scope>
    <source>
        <tissue>Tonsil</tissue>
    </source>
</reference>
<reference key="8">
    <citation type="journal article" date="2006" name="Biochem. J.">
        <title>Man2C1, an alpha-mannosidase, is involved in the trimming of free oligosaccharides in the cytosol.</title>
        <authorList>
            <person name="Suzuki T."/>
            <person name="Hara I."/>
            <person name="Nakano M."/>
            <person name="Shigeta M."/>
            <person name="Nakagawa T."/>
            <person name="Kondo A."/>
            <person name="Funakoshi Y."/>
            <person name="Taniguchi N."/>
        </authorList>
    </citation>
    <scope>FUNCTION</scope>
    <scope>CATALYTIC ACTIVITY</scope>
    <scope>COFACTOR</scope>
    <scope>ACTIVITY REGULATION</scope>
    <scope>SUBCELLULAR LOCATION</scope>
</reference>
<reference key="9">
    <citation type="journal article" date="2011" name="BMC Syst. Biol.">
        <title>Initial characterization of the human central proteome.</title>
        <authorList>
            <person name="Burkard T.R."/>
            <person name="Planyavsky M."/>
            <person name="Kaupe I."/>
            <person name="Breitwieser F.P."/>
            <person name="Buerckstuemmer T."/>
            <person name="Bennett K.L."/>
            <person name="Superti-Furga G."/>
            <person name="Colinge J."/>
        </authorList>
    </citation>
    <scope>IDENTIFICATION BY MASS SPECTROMETRY [LARGE SCALE ANALYSIS]</scope>
</reference>
<reference key="10">
    <citation type="journal article" date="2022" name="Am. J. Hum. Genet.">
        <title>Impaired catabolism of free oligosaccharides due to MAN2C1 variants causes a neurodevelopmental disorder.</title>
        <authorList>
            <person name="Maia N."/>
            <person name="Potelle S."/>
            <person name="Yildirim H."/>
            <person name="Duvet S."/>
            <person name="Akula S.K."/>
            <person name="Schulz C."/>
            <person name="Wiame E."/>
            <person name="Gheldof A."/>
            <person name="O'Kane K."/>
            <person name="Lai A."/>
            <person name="Sermon K."/>
            <person name="Proisy M."/>
            <person name="Loget P."/>
            <person name="Attie-Bitach T."/>
            <person name="Quelin C."/>
            <person name="Fortuna A.M."/>
            <person name="Soares A.R."/>
            <person name="de Brouwer A.P.M."/>
            <person name="Van Schaftingen E."/>
            <person name="Nassogne M.C."/>
            <person name="Walsh C.A."/>
            <person name="Stouffs K."/>
            <person name="Jorge P."/>
            <person name="Jansen A.C."/>
            <person name="Foulquier F."/>
        </authorList>
    </citation>
    <scope>VARIANTS CDDG2 ARG-203; GLN-768 AND SER-871</scope>
    <scope>INVOLVEMENT IN CDDG2</scope>
    <scope>CHARACTERIZATION OF VARIANTS CDDG2 ARG-203; GLN-768 AND SER-871</scope>
    <scope>FUNCTION</scope>
</reference>
<gene>
    <name type="primary">MAN2C1</name>
    <name type="synonym">MANA</name>
    <name type="synonym">MANA1</name>
</gene>